<protein>
    <recommendedName>
        <fullName>RNA-binding protein 48</fullName>
    </recommendedName>
</protein>
<sequence>MASSGGELGSLFDHHVQRAVCDTRAKYREGRRPRAVKVYTINLESQYLLIQGVPAVGVMKELVERFALYGTIEQYNALDEYPAEDFTEVYLIKFMNLQSARAAKRKMDEQSFFGGLLHVCYAPEFETVEETRKKLQVRKAYVVKTTENKDHYVTKKKLVTEHKDTEDFRQDFHSEMSGFCKAALNTSAGNSNPYLPYSCELPLCYFSSKCMCSSRGPVDRASDSSKDGRNHHKTMGHYNHNGSLQKTQINSFKNSVACPGAQKAVTSSEAVDRFMPRTTQLQERKRRREDDRKLGTFLQTNPSGNEVMIGPLLPDISKVDMHDDSLNTTANLIRHKLKEVISSVPKPPEDKPEDVNTSHPLKQRRRI</sequence>
<proteinExistence type="evidence at transcript level"/>
<organism>
    <name type="scientific">Pongo abelii</name>
    <name type="common">Sumatran orangutan</name>
    <name type="synonym">Pongo pygmaeus abelii</name>
    <dbReference type="NCBI Taxonomy" id="9601"/>
    <lineage>
        <taxon>Eukaryota</taxon>
        <taxon>Metazoa</taxon>
        <taxon>Chordata</taxon>
        <taxon>Craniata</taxon>
        <taxon>Vertebrata</taxon>
        <taxon>Euteleostomi</taxon>
        <taxon>Mammalia</taxon>
        <taxon>Eutheria</taxon>
        <taxon>Euarchontoglires</taxon>
        <taxon>Primates</taxon>
        <taxon>Haplorrhini</taxon>
        <taxon>Catarrhini</taxon>
        <taxon>Hominidae</taxon>
        <taxon>Pongo</taxon>
    </lineage>
</organism>
<reference key="1">
    <citation type="submission" date="2004-11" db="EMBL/GenBank/DDBJ databases">
        <authorList>
            <consortium name="The German cDNA consortium"/>
        </authorList>
    </citation>
    <scope>NUCLEOTIDE SEQUENCE [LARGE SCALE MRNA]</scope>
    <source>
        <tissue>Brain cortex</tissue>
    </source>
</reference>
<gene>
    <name type="primary">RBM48</name>
</gene>
<evidence type="ECO:0000250" key="1">
    <source>
        <dbReference type="UniProtKB" id="Q5RL73"/>
    </source>
</evidence>
<evidence type="ECO:0000256" key="2">
    <source>
        <dbReference type="SAM" id="MobiDB-lite"/>
    </source>
</evidence>
<evidence type="ECO:0000305" key="3"/>
<feature type="chain" id="PRO_0000321516" description="RNA-binding protein 48">
    <location>
        <begin position="1"/>
        <end position="367"/>
    </location>
</feature>
<feature type="domain" description="RRM">
    <location>
        <begin position="46"/>
        <end position="124"/>
    </location>
</feature>
<feature type="region of interest" description="Disordered" evidence="2">
    <location>
        <begin position="217"/>
        <end position="243"/>
    </location>
</feature>
<feature type="region of interest" description="Disordered" evidence="2">
    <location>
        <begin position="277"/>
        <end position="303"/>
    </location>
</feature>
<feature type="region of interest" description="Disordered" evidence="2">
    <location>
        <begin position="339"/>
        <end position="367"/>
    </location>
</feature>
<feature type="compositionally biased region" description="Basic and acidic residues" evidence="2">
    <location>
        <begin position="217"/>
        <end position="228"/>
    </location>
</feature>
<feature type="compositionally biased region" description="Basic and acidic residues" evidence="2">
    <location>
        <begin position="347"/>
        <end position="356"/>
    </location>
</feature>
<feature type="sequence conflict" description="In Ref. 1; CAH91725." evidence="3" ref="1">
    <original>V</original>
    <variation>A</variation>
    <location>
        <position position="63"/>
    </location>
</feature>
<feature type="sequence conflict" description="In Ref. 1; CAH91725." evidence="3" ref="1">
    <original>V</original>
    <variation>A</variation>
    <location>
        <position position="271"/>
    </location>
</feature>
<accession>Q5R4U2</accession>
<accession>Q5R935</accession>
<comment type="function">
    <text evidence="1">As a component of the minor spliceosome, involved in the splicing of U12-type introns in pre-mRNAs.</text>
</comment>
<comment type="subunit">
    <text evidence="1">Component of the minor spliceosome. Within this complex, interacts with ARMC7 and PRPF8/PRP8.</text>
</comment>
<comment type="similarity">
    <text evidence="3">Belongs to the RBM48 family.</text>
</comment>
<name>RBM48_PONAB</name>
<dbReference type="EMBL" id="CR859560">
    <property type="protein sequence ID" value="CAH91725.1"/>
    <property type="molecule type" value="mRNA"/>
</dbReference>
<dbReference type="EMBL" id="CR861149">
    <property type="protein sequence ID" value="CAH93224.1"/>
    <property type="molecule type" value="mRNA"/>
</dbReference>
<dbReference type="RefSeq" id="NP_001126896.1">
    <property type="nucleotide sequence ID" value="NM_001133424.1"/>
</dbReference>
<dbReference type="SMR" id="Q5R4U2"/>
<dbReference type="FunCoup" id="Q5R4U2">
    <property type="interactions" value="2068"/>
</dbReference>
<dbReference type="STRING" id="9601.ENSPPYP00000019971"/>
<dbReference type="Ensembl" id="ENSPPYT00000052716.1">
    <property type="protein sequence ID" value="ENSPPYP00000034154.1"/>
    <property type="gene ID" value="ENSPPYG00000017819.3"/>
</dbReference>
<dbReference type="GeneID" id="100173911"/>
<dbReference type="KEGG" id="pon:100173911"/>
<dbReference type="CTD" id="84060"/>
<dbReference type="eggNOG" id="ENOG502QSNB">
    <property type="taxonomic scope" value="Eukaryota"/>
</dbReference>
<dbReference type="GeneTree" id="ENSGT00390000004541"/>
<dbReference type="HOGENOM" id="CLU_065720_0_0_1"/>
<dbReference type="InParanoid" id="Q5R4U2"/>
<dbReference type="OrthoDB" id="78358at2759"/>
<dbReference type="TreeFam" id="TF328457"/>
<dbReference type="Proteomes" id="UP000001595">
    <property type="component" value="Chromosome 7"/>
</dbReference>
<dbReference type="GO" id="GO:0005654">
    <property type="term" value="C:nucleoplasm"/>
    <property type="evidence" value="ECO:0007669"/>
    <property type="project" value="TreeGrafter"/>
</dbReference>
<dbReference type="GO" id="GO:0005681">
    <property type="term" value="C:spliceosomal complex"/>
    <property type="evidence" value="ECO:0007669"/>
    <property type="project" value="UniProtKB-KW"/>
</dbReference>
<dbReference type="GO" id="GO:0003723">
    <property type="term" value="F:RNA binding"/>
    <property type="evidence" value="ECO:0007669"/>
    <property type="project" value="UniProtKB-KW"/>
</dbReference>
<dbReference type="GO" id="GO:0006397">
    <property type="term" value="P:mRNA processing"/>
    <property type="evidence" value="ECO:0007669"/>
    <property type="project" value="UniProtKB-KW"/>
</dbReference>
<dbReference type="GO" id="GO:0008380">
    <property type="term" value="P:RNA splicing"/>
    <property type="evidence" value="ECO:0007669"/>
    <property type="project" value="UniProtKB-KW"/>
</dbReference>
<dbReference type="CDD" id="cd12442">
    <property type="entry name" value="RRM_RBM48"/>
    <property type="match status" value="1"/>
</dbReference>
<dbReference type="FunFam" id="3.30.70.330:FF:000424">
    <property type="entry name" value="RNA-binding protein 48 isoform X4"/>
    <property type="match status" value="1"/>
</dbReference>
<dbReference type="InterPro" id="IPR035979">
    <property type="entry name" value="RBD_domain_sf"/>
</dbReference>
<dbReference type="InterPro" id="IPR039599">
    <property type="entry name" value="RBM48"/>
</dbReference>
<dbReference type="InterPro" id="IPR034264">
    <property type="entry name" value="RBM48_RRM"/>
</dbReference>
<dbReference type="PANTHER" id="PTHR20957">
    <property type="entry name" value="RNA-BINDING PROTEIN 48"/>
    <property type="match status" value="1"/>
</dbReference>
<dbReference type="PANTHER" id="PTHR20957:SF1">
    <property type="entry name" value="RNA-BINDING PROTEIN 48"/>
    <property type="match status" value="1"/>
</dbReference>
<dbReference type="SUPFAM" id="SSF54928">
    <property type="entry name" value="RNA-binding domain, RBD"/>
    <property type="match status" value="1"/>
</dbReference>
<keyword id="KW-0507">mRNA processing</keyword>
<keyword id="KW-0508">mRNA splicing</keyword>
<keyword id="KW-1185">Reference proteome</keyword>
<keyword id="KW-0694">RNA-binding</keyword>
<keyword id="KW-0747">Spliceosome</keyword>